<evidence type="ECO:0000255" key="1">
    <source>
        <dbReference type="PROSITE-ProRule" id="PRU10073"/>
    </source>
</evidence>
<feature type="chain" id="PRO_0000206788" description="Uncharacterized protein in pqqA 5'region">
    <location>
        <begin position="1" status="less than"/>
        <end position="271"/>
    </location>
</feature>
<feature type="non-terminal residue">
    <location>
        <position position="1"/>
    </location>
</feature>
<reference key="1">
    <citation type="journal article" date="1992" name="Mol. Gen. Genet.">
        <title>Nucleotide sequence and structure of the Klebsiella pneumoniae pqq operon.</title>
        <authorList>
            <person name="Meulenberg J.J.M."/>
            <person name="Sellink E."/>
            <person name="Riegman N.H."/>
            <person name="Postma P.W."/>
        </authorList>
    </citation>
    <scope>NUCLEOTIDE SEQUENCE [GENOMIC DNA]</scope>
    <source>
        <strain>ATCC 15380 / DSM 2026 / NCTC 418 / NCIMB 418</strain>
    </source>
</reference>
<dbReference type="EMBL" id="X58778">
    <property type="protein sequence ID" value="CAA41578.1"/>
    <property type="molecule type" value="Genomic_DNA"/>
</dbReference>
<dbReference type="PIR" id="S20452">
    <property type="entry name" value="S20452"/>
</dbReference>
<dbReference type="SMR" id="P27509"/>
<dbReference type="MEROPS" id="M19.003"/>
<dbReference type="GO" id="GO:0070573">
    <property type="term" value="F:metallodipeptidase activity"/>
    <property type="evidence" value="ECO:0007669"/>
    <property type="project" value="InterPro"/>
</dbReference>
<dbReference type="GO" id="GO:0006508">
    <property type="term" value="P:proteolysis"/>
    <property type="evidence" value="ECO:0007669"/>
    <property type="project" value="InterPro"/>
</dbReference>
<dbReference type="Gene3D" id="3.20.20.140">
    <property type="entry name" value="Metal-dependent hydrolases"/>
    <property type="match status" value="1"/>
</dbReference>
<dbReference type="InterPro" id="IPR032466">
    <property type="entry name" value="Metal_Hydrolase"/>
</dbReference>
<dbReference type="InterPro" id="IPR008257">
    <property type="entry name" value="Pept_M19"/>
</dbReference>
<dbReference type="PANTHER" id="PTHR10443:SF12">
    <property type="entry name" value="DIPEPTIDASE"/>
    <property type="match status" value="1"/>
</dbReference>
<dbReference type="PANTHER" id="PTHR10443">
    <property type="entry name" value="MICROSOMAL DIPEPTIDASE"/>
    <property type="match status" value="1"/>
</dbReference>
<dbReference type="Pfam" id="PF01244">
    <property type="entry name" value="Peptidase_M19"/>
    <property type="match status" value="1"/>
</dbReference>
<dbReference type="SUPFAM" id="SSF51556">
    <property type="entry name" value="Metallo-dependent hydrolases"/>
    <property type="match status" value="1"/>
</dbReference>
<dbReference type="PROSITE" id="PS00869">
    <property type="entry name" value="RENAL_DIPEPTIDASE_1"/>
    <property type="match status" value="1"/>
</dbReference>
<dbReference type="PROSITE" id="PS51365">
    <property type="entry name" value="RENAL_DIPEPTIDASE_2"/>
    <property type="match status" value="1"/>
</dbReference>
<comment type="similarity">
    <text evidence="1">Belongs to the metallo-dependent hydrolases superfamily. Peptidase M19 family.</text>
</comment>
<protein>
    <recommendedName>
        <fullName>Uncharacterized protein in pqqA 5'region</fullName>
    </recommendedName>
    <alternativeName>
        <fullName>ORF X</fullName>
    </alternativeName>
</protein>
<name>YPQQ_KLEPN</name>
<organism>
    <name type="scientific">Klebsiella pneumoniae</name>
    <dbReference type="NCBI Taxonomy" id="573"/>
    <lineage>
        <taxon>Bacteria</taxon>
        <taxon>Pseudomonadati</taxon>
        <taxon>Pseudomonadota</taxon>
        <taxon>Gammaproteobacteria</taxon>
        <taxon>Enterobacterales</taxon>
        <taxon>Enterobacteriaceae</taxon>
        <taxon>Klebsiella/Raoultella group</taxon>
        <taxon>Klebsiella</taxon>
        <taxon>Klebsiella pneumoniae complex</taxon>
    </lineage>
</organism>
<sequence length="271" mass="29484">SVPGDPIDILWQQLAILKQLIAHSAGRLRLCLSAADIERCREDKVLAMVAHIEGAGGFDGEGRDLQAFYAAGVRSIGPFWNIANRFGSGVNGSFPGSPDTGPGLTAAGIDLIKQVNALKMQIDVSHMNEKAFWDTAHHATSPLVATHSNAHALCPQPRNLTDQQLRAIRDSGGVVGVNFGNAFLRADGRRDSDTPLTTIVRHIDYLINIMGEDHVALGSDFDGITLPDELGDVAGLPRLINTLRASGYDQLVLDKLLWRNWLRVLKNVWQQ</sequence>
<accession>P27509</accession>
<proteinExistence type="inferred from homology"/>